<dbReference type="EMBL" id="CP001280">
    <property type="protein sequence ID" value="ACK49984.1"/>
    <property type="molecule type" value="Genomic_DNA"/>
</dbReference>
<dbReference type="RefSeq" id="WP_012590054.1">
    <property type="nucleotide sequence ID" value="NC_011666.1"/>
</dbReference>
<dbReference type="SMR" id="B8ELJ0"/>
<dbReference type="STRING" id="395965.Msil_1015"/>
<dbReference type="KEGG" id="msl:Msil_1015"/>
<dbReference type="eggNOG" id="COG2967">
    <property type="taxonomic scope" value="Bacteria"/>
</dbReference>
<dbReference type="HOGENOM" id="CLU_128074_1_0_5"/>
<dbReference type="OrthoDB" id="9795226at2"/>
<dbReference type="Proteomes" id="UP000002257">
    <property type="component" value="Chromosome"/>
</dbReference>
<dbReference type="GO" id="GO:0070987">
    <property type="term" value="P:error-free translesion synthesis"/>
    <property type="evidence" value="ECO:0007669"/>
    <property type="project" value="TreeGrafter"/>
</dbReference>
<dbReference type="Gene3D" id="2.60.40.1470">
    <property type="entry name" value="ApaG domain"/>
    <property type="match status" value="1"/>
</dbReference>
<dbReference type="HAMAP" id="MF_00791">
    <property type="entry name" value="ApaG"/>
    <property type="match status" value="1"/>
</dbReference>
<dbReference type="InterPro" id="IPR007474">
    <property type="entry name" value="ApaG_domain"/>
</dbReference>
<dbReference type="InterPro" id="IPR036767">
    <property type="entry name" value="ApaG_sf"/>
</dbReference>
<dbReference type="InterPro" id="IPR023065">
    <property type="entry name" value="Uncharacterised_ApaG"/>
</dbReference>
<dbReference type="NCBIfam" id="NF003967">
    <property type="entry name" value="PRK05461.1"/>
    <property type="match status" value="1"/>
</dbReference>
<dbReference type="PANTHER" id="PTHR14289">
    <property type="entry name" value="F-BOX ONLY PROTEIN 3"/>
    <property type="match status" value="1"/>
</dbReference>
<dbReference type="PANTHER" id="PTHR14289:SF16">
    <property type="entry name" value="POLYMERASE DELTA-INTERACTING PROTEIN 2"/>
    <property type="match status" value="1"/>
</dbReference>
<dbReference type="Pfam" id="PF04379">
    <property type="entry name" value="DUF525"/>
    <property type="match status" value="1"/>
</dbReference>
<dbReference type="SUPFAM" id="SSF110069">
    <property type="entry name" value="ApaG-like"/>
    <property type="match status" value="1"/>
</dbReference>
<dbReference type="PROSITE" id="PS51087">
    <property type="entry name" value="APAG"/>
    <property type="match status" value="1"/>
</dbReference>
<evidence type="ECO:0000255" key="1">
    <source>
        <dbReference type="HAMAP-Rule" id="MF_00791"/>
    </source>
</evidence>
<proteinExistence type="inferred from homology"/>
<sequence length="130" mass="14546">MYSAVTQDIQITVLPEFIPERSNADQAMFFWAYTVEIANQSEKTVQLTARHWKITDGNGRLEEVQGPGVVGEQPILKPGETFRYTSGSNLTTPSGIMTGAYRMVDENGEEFDAQIPVFSLDSPFVRRVLN</sequence>
<reference key="1">
    <citation type="journal article" date="2010" name="J. Bacteriol.">
        <title>Complete genome sequence of the aerobic facultative methanotroph Methylocella silvestris BL2.</title>
        <authorList>
            <person name="Chen Y."/>
            <person name="Crombie A."/>
            <person name="Rahman M.T."/>
            <person name="Dedysh S.N."/>
            <person name="Liesack W."/>
            <person name="Stott M.B."/>
            <person name="Alam M."/>
            <person name="Theisen A.R."/>
            <person name="Murrell J.C."/>
            <person name="Dunfield P.F."/>
        </authorList>
    </citation>
    <scope>NUCLEOTIDE SEQUENCE [LARGE SCALE GENOMIC DNA]</scope>
    <source>
        <strain>DSM 15510 / CIP 108128 / LMG 27833 / NCIMB 13906 / BL2</strain>
    </source>
</reference>
<name>APAG_METSB</name>
<feature type="chain" id="PRO_1000148501" description="Protein ApaG">
    <location>
        <begin position="1"/>
        <end position="130"/>
    </location>
</feature>
<feature type="domain" description="ApaG" evidence="1">
    <location>
        <begin position="3"/>
        <end position="127"/>
    </location>
</feature>
<gene>
    <name evidence="1" type="primary">apaG</name>
    <name type="ordered locus">Msil_1015</name>
</gene>
<organism>
    <name type="scientific">Methylocella silvestris (strain DSM 15510 / CIP 108128 / LMG 27833 / NCIMB 13906 / BL2)</name>
    <dbReference type="NCBI Taxonomy" id="395965"/>
    <lineage>
        <taxon>Bacteria</taxon>
        <taxon>Pseudomonadati</taxon>
        <taxon>Pseudomonadota</taxon>
        <taxon>Alphaproteobacteria</taxon>
        <taxon>Hyphomicrobiales</taxon>
        <taxon>Beijerinckiaceae</taxon>
        <taxon>Methylocella</taxon>
    </lineage>
</organism>
<keyword id="KW-1185">Reference proteome</keyword>
<accession>B8ELJ0</accession>
<protein>
    <recommendedName>
        <fullName evidence="1">Protein ApaG</fullName>
    </recommendedName>
</protein>